<accession>B1IPV8</accession>
<organism>
    <name type="scientific">Escherichia coli (strain ATCC 8739 / DSM 1576 / NBRC 3972 / NCIMB 8545 / WDCM 00012 / Crooks)</name>
    <dbReference type="NCBI Taxonomy" id="481805"/>
    <lineage>
        <taxon>Bacteria</taxon>
        <taxon>Pseudomonadati</taxon>
        <taxon>Pseudomonadota</taxon>
        <taxon>Gammaproteobacteria</taxon>
        <taxon>Enterobacterales</taxon>
        <taxon>Enterobacteriaceae</taxon>
        <taxon>Escherichia</taxon>
    </lineage>
</organism>
<proteinExistence type="inferred from homology"/>
<comment type="function">
    <text evidence="1">One of the primary rRNA binding proteins, it binds directly to 16S rRNA where it nucleates assembly of the head domain of the 30S subunit. Is located at the subunit interface close to the decoding center, probably blocks exit of the E-site tRNA.</text>
</comment>
<comment type="subunit">
    <text evidence="1">Part of the 30S ribosomal subunit. Contacts proteins S9 and S11.</text>
</comment>
<comment type="similarity">
    <text evidence="1">Belongs to the universal ribosomal protein uS7 family.</text>
</comment>
<gene>
    <name evidence="1" type="primary">rpsG</name>
    <name type="ordered locus">EcolC_0372</name>
</gene>
<reference key="1">
    <citation type="submission" date="2008-02" db="EMBL/GenBank/DDBJ databases">
        <title>Complete sequence of Escherichia coli C str. ATCC 8739.</title>
        <authorList>
            <person name="Copeland A."/>
            <person name="Lucas S."/>
            <person name="Lapidus A."/>
            <person name="Glavina del Rio T."/>
            <person name="Dalin E."/>
            <person name="Tice H."/>
            <person name="Bruce D."/>
            <person name="Goodwin L."/>
            <person name="Pitluck S."/>
            <person name="Kiss H."/>
            <person name="Brettin T."/>
            <person name="Detter J.C."/>
            <person name="Han C."/>
            <person name="Kuske C.R."/>
            <person name="Schmutz J."/>
            <person name="Larimer F."/>
            <person name="Land M."/>
            <person name="Hauser L."/>
            <person name="Kyrpides N."/>
            <person name="Mikhailova N."/>
            <person name="Ingram L."/>
            <person name="Richardson P."/>
        </authorList>
    </citation>
    <scope>NUCLEOTIDE SEQUENCE [LARGE SCALE GENOMIC DNA]</scope>
    <source>
        <strain>ATCC 8739 / DSM 1576 / NBRC 3972 / NCIMB 8545 / WDCM 00012 / Crooks</strain>
    </source>
</reference>
<evidence type="ECO:0000255" key="1">
    <source>
        <dbReference type="HAMAP-Rule" id="MF_00480"/>
    </source>
</evidence>
<evidence type="ECO:0000305" key="2"/>
<feature type="chain" id="PRO_1000081281" description="Small ribosomal subunit protein uS7">
    <location>
        <begin position="1"/>
        <end position="156"/>
    </location>
</feature>
<protein>
    <recommendedName>
        <fullName evidence="1">Small ribosomal subunit protein uS7</fullName>
    </recommendedName>
    <alternativeName>
        <fullName evidence="2">30S ribosomal protein S7</fullName>
    </alternativeName>
</protein>
<name>RS7_ECOLC</name>
<dbReference type="EMBL" id="CP000946">
    <property type="protein sequence ID" value="ACA76050.1"/>
    <property type="molecule type" value="Genomic_DNA"/>
</dbReference>
<dbReference type="RefSeq" id="WP_001138043.1">
    <property type="nucleotide sequence ID" value="NZ_MTFT01000001.1"/>
</dbReference>
<dbReference type="SMR" id="B1IPV8"/>
<dbReference type="GeneID" id="93778657"/>
<dbReference type="KEGG" id="ecl:EcolC_0372"/>
<dbReference type="HOGENOM" id="CLU_072226_1_1_6"/>
<dbReference type="GO" id="GO:0015935">
    <property type="term" value="C:small ribosomal subunit"/>
    <property type="evidence" value="ECO:0007669"/>
    <property type="project" value="InterPro"/>
</dbReference>
<dbReference type="GO" id="GO:0019843">
    <property type="term" value="F:rRNA binding"/>
    <property type="evidence" value="ECO:0007669"/>
    <property type="project" value="UniProtKB-UniRule"/>
</dbReference>
<dbReference type="GO" id="GO:0003735">
    <property type="term" value="F:structural constituent of ribosome"/>
    <property type="evidence" value="ECO:0007669"/>
    <property type="project" value="InterPro"/>
</dbReference>
<dbReference type="GO" id="GO:0000049">
    <property type="term" value="F:tRNA binding"/>
    <property type="evidence" value="ECO:0007669"/>
    <property type="project" value="UniProtKB-UniRule"/>
</dbReference>
<dbReference type="GO" id="GO:0006412">
    <property type="term" value="P:translation"/>
    <property type="evidence" value="ECO:0007669"/>
    <property type="project" value="UniProtKB-UniRule"/>
</dbReference>
<dbReference type="CDD" id="cd14869">
    <property type="entry name" value="uS7_Bacteria"/>
    <property type="match status" value="1"/>
</dbReference>
<dbReference type="FunFam" id="1.10.455.10:FF:000001">
    <property type="entry name" value="30S ribosomal protein S7"/>
    <property type="match status" value="1"/>
</dbReference>
<dbReference type="Gene3D" id="1.10.455.10">
    <property type="entry name" value="Ribosomal protein S7 domain"/>
    <property type="match status" value="1"/>
</dbReference>
<dbReference type="HAMAP" id="MF_00480_B">
    <property type="entry name" value="Ribosomal_uS7_B"/>
    <property type="match status" value="1"/>
</dbReference>
<dbReference type="InterPro" id="IPR000235">
    <property type="entry name" value="Ribosomal_uS7"/>
</dbReference>
<dbReference type="InterPro" id="IPR005717">
    <property type="entry name" value="Ribosomal_uS7_bac/org-type"/>
</dbReference>
<dbReference type="InterPro" id="IPR020606">
    <property type="entry name" value="Ribosomal_uS7_CS"/>
</dbReference>
<dbReference type="InterPro" id="IPR023798">
    <property type="entry name" value="Ribosomal_uS7_dom"/>
</dbReference>
<dbReference type="InterPro" id="IPR036823">
    <property type="entry name" value="Ribosomal_uS7_dom_sf"/>
</dbReference>
<dbReference type="NCBIfam" id="TIGR01029">
    <property type="entry name" value="rpsG_bact"/>
    <property type="match status" value="1"/>
</dbReference>
<dbReference type="PANTHER" id="PTHR11205">
    <property type="entry name" value="RIBOSOMAL PROTEIN S7"/>
    <property type="match status" value="1"/>
</dbReference>
<dbReference type="Pfam" id="PF00177">
    <property type="entry name" value="Ribosomal_S7"/>
    <property type="match status" value="1"/>
</dbReference>
<dbReference type="PIRSF" id="PIRSF002122">
    <property type="entry name" value="RPS7p_RPS7a_RPS5e_RPS7o"/>
    <property type="match status" value="1"/>
</dbReference>
<dbReference type="SUPFAM" id="SSF47973">
    <property type="entry name" value="Ribosomal protein S7"/>
    <property type="match status" value="1"/>
</dbReference>
<dbReference type="PROSITE" id="PS00052">
    <property type="entry name" value="RIBOSOMAL_S7"/>
    <property type="match status" value="1"/>
</dbReference>
<keyword id="KW-0687">Ribonucleoprotein</keyword>
<keyword id="KW-0689">Ribosomal protein</keyword>
<keyword id="KW-0694">RNA-binding</keyword>
<keyword id="KW-0699">rRNA-binding</keyword>
<keyword id="KW-0820">tRNA-binding</keyword>
<sequence length="156" mass="17604">MPRRRVIGQRKILPDPKFGSELLAKFVNILMVDGKKSTAESIVYSALETLAQRSGKSELEAFEVALENVRPTVEVKSRRVGGSTYQVPVEVRPVRRNALAMRWIVEAARKRGDKSMALRLANELSDAAENKGTAVKKREDVHRMAEANKAFAHYRW</sequence>